<comment type="similarity">
    <text evidence="2">Belongs to the eukaryotic ribosomal protein eL13 family.</text>
</comment>
<organism>
    <name type="scientific">Schistosoma mansoni</name>
    <name type="common">Blood fluke</name>
    <dbReference type="NCBI Taxonomy" id="6183"/>
    <lineage>
        <taxon>Eukaryota</taxon>
        <taxon>Metazoa</taxon>
        <taxon>Spiralia</taxon>
        <taxon>Lophotrochozoa</taxon>
        <taxon>Platyhelminthes</taxon>
        <taxon>Trematoda</taxon>
        <taxon>Digenea</taxon>
        <taxon>Strigeidida</taxon>
        <taxon>Schistosomatoidea</taxon>
        <taxon>Schistosomatidae</taxon>
        <taxon>Schistosoma</taxon>
    </lineage>
</organism>
<gene>
    <name type="primary">RPL13</name>
    <name type="synonym">BBC1</name>
</gene>
<reference key="1">
    <citation type="submission" date="1996-04" db="EMBL/GenBank/DDBJ databases">
        <authorList>
            <person name="Franco G.R."/>
            <person name="Tanaka M."/>
            <person name="Simpson A.J.G."/>
            <person name="Pena S.D.J."/>
        </authorList>
    </citation>
    <scope>NUCLEOTIDE SEQUENCE [MRNA]</scope>
    <source>
        <strain>NMRI</strain>
    </source>
</reference>
<sequence>MVHGNDVLHHNHFRKKWQFMVKTWFNQPARKERRRQARKAKAQRIAPRPASGPLRPIVNCPTFRYNMKVRSGRGFSLQEVRAAGLNPKFARTIGIAVDHRRRNVSVEGLQRNVARLKAYKAKLILFPLNPAKPQAMDAKADEVKKATQLRRPVLPITQRAKRLKAHKPTSSELRYSAFHAIRQQ</sequence>
<proteinExistence type="evidence at transcript level"/>
<feature type="chain" id="PRO_0000192929" description="Large ribosomal subunit protein eL13">
    <location>
        <begin position="1"/>
        <end position="184"/>
    </location>
</feature>
<feature type="region of interest" description="Disordered" evidence="1">
    <location>
        <begin position="28"/>
        <end position="53"/>
    </location>
</feature>
<feature type="compositionally biased region" description="Basic residues" evidence="1">
    <location>
        <begin position="31"/>
        <end position="42"/>
    </location>
</feature>
<keyword id="KW-1185">Reference proteome</keyword>
<keyword id="KW-0687">Ribonucleoprotein</keyword>
<keyword id="KW-0689">Ribosomal protein</keyword>
<name>RL13_SCHMA</name>
<dbReference type="EMBL" id="U57003">
    <property type="protein sequence ID" value="AAB09445.1"/>
    <property type="molecule type" value="mRNA"/>
</dbReference>
<dbReference type="SMR" id="Q95043"/>
<dbReference type="FunCoup" id="Q95043">
    <property type="interactions" value="1304"/>
</dbReference>
<dbReference type="STRING" id="6183.Q95043"/>
<dbReference type="eggNOG" id="KOG3295">
    <property type="taxonomic scope" value="Eukaryota"/>
</dbReference>
<dbReference type="HOGENOM" id="CLU_075696_1_0_1"/>
<dbReference type="InParanoid" id="Q95043"/>
<dbReference type="Proteomes" id="UP000008854">
    <property type="component" value="Unassembled WGS sequence"/>
</dbReference>
<dbReference type="GO" id="GO:0022625">
    <property type="term" value="C:cytosolic large ribosomal subunit"/>
    <property type="evidence" value="ECO:0007669"/>
    <property type="project" value="TreeGrafter"/>
</dbReference>
<dbReference type="GO" id="GO:0003723">
    <property type="term" value="F:RNA binding"/>
    <property type="evidence" value="ECO:0007669"/>
    <property type="project" value="TreeGrafter"/>
</dbReference>
<dbReference type="GO" id="GO:0003735">
    <property type="term" value="F:structural constituent of ribosome"/>
    <property type="evidence" value="ECO:0007669"/>
    <property type="project" value="InterPro"/>
</dbReference>
<dbReference type="GO" id="GO:0006412">
    <property type="term" value="P:translation"/>
    <property type="evidence" value="ECO:0007669"/>
    <property type="project" value="InterPro"/>
</dbReference>
<dbReference type="HAMAP" id="MF_00499">
    <property type="entry name" value="Ribosomal_eL13"/>
    <property type="match status" value="1"/>
</dbReference>
<dbReference type="InterPro" id="IPR001380">
    <property type="entry name" value="Ribosomal_eL13"/>
</dbReference>
<dbReference type="InterPro" id="IPR018256">
    <property type="entry name" value="Ribosomal_eL13_CS"/>
</dbReference>
<dbReference type="PANTHER" id="PTHR11722">
    <property type="entry name" value="60S RIBOSOMAL PROTEIN L13"/>
    <property type="match status" value="1"/>
</dbReference>
<dbReference type="PANTHER" id="PTHR11722:SF0">
    <property type="entry name" value="LARGE RIBOSOMAL SUBUNIT PROTEIN EL13"/>
    <property type="match status" value="1"/>
</dbReference>
<dbReference type="Pfam" id="PF01294">
    <property type="entry name" value="Ribosomal_L13e"/>
    <property type="match status" value="1"/>
</dbReference>
<dbReference type="PROSITE" id="PS01104">
    <property type="entry name" value="RIBOSOMAL_L13E"/>
    <property type="match status" value="1"/>
</dbReference>
<accession>Q95043</accession>
<evidence type="ECO:0000256" key="1">
    <source>
        <dbReference type="SAM" id="MobiDB-lite"/>
    </source>
</evidence>
<evidence type="ECO:0000305" key="2"/>
<protein>
    <recommendedName>
        <fullName evidence="2">Large ribosomal subunit protein eL13</fullName>
    </recommendedName>
    <alternativeName>
        <fullName>60S ribosomal protein L13</fullName>
    </alternativeName>
    <alternativeName>
        <fullName>BBC1 protein homolog</fullName>
    </alternativeName>
</protein>